<dbReference type="EC" id="6.3.4.5" evidence="1"/>
<dbReference type="EMBL" id="BA000023">
    <property type="protein sequence ID" value="BAK54606.1"/>
    <property type="molecule type" value="Genomic_DNA"/>
</dbReference>
<dbReference type="RefSeq" id="WP_010979551.1">
    <property type="nucleotide sequence ID" value="NC_003106.2"/>
</dbReference>
<dbReference type="SMR" id="Q970V0"/>
<dbReference type="STRING" id="273063.STK_15010"/>
<dbReference type="GeneID" id="1459537"/>
<dbReference type="KEGG" id="sto:STK_15010"/>
<dbReference type="PATRIC" id="fig|273063.9.peg.1709"/>
<dbReference type="eggNOG" id="arCOG00112">
    <property type="taxonomic scope" value="Archaea"/>
</dbReference>
<dbReference type="OrthoDB" id="5877at2157"/>
<dbReference type="UniPathway" id="UPA00068">
    <property type="reaction ID" value="UER00113"/>
</dbReference>
<dbReference type="Proteomes" id="UP000001015">
    <property type="component" value="Chromosome"/>
</dbReference>
<dbReference type="GO" id="GO:0005737">
    <property type="term" value="C:cytoplasm"/>
    <property type="evidence" value="ECO:0007669"/>
    <property type="project" value="UniProtKB-SubCell"/>
</dbReference>
<dbReference type="GO" id="GO:0004055">
    <property type="term" value="F:argininosuccinate synthase activity"/>
    <property type="evidence" value="ECO:0007669"/>
    <property type="project" value="UniProtKB-UniRule"/>
</dbReference>
<dbReference type="GO" id="GO:0005524">
    <property type="term" value="F:ATP binding"/>
    <property type="evidence" value="ECO:0007669"/>
    <property type="project" value="UniProtKB-UniRule"/>
</dbReference>
<dbReference type="GO" id="GO:0000053">
    <property type="term" value="P:argininosuccinate metabolic process"/>
    <property type="evidence" value="ECO:0007669"/>
    <property type="project" value="TreeGrafter"/>
</dbReference>
<dbReference type="GO" id="GO:0006526">
    <property type="term" value="P:L-arginine biosynthetic process"/>
    <property type="evidence" value="ECO:0007669"/>
    <property type="project" value="UniProtKB-UniRule"/>
</dbReference>
<dbReference type="GO" id="GO:0000050">
    <property type="term" value="P:urea cycle"/>
    <property type="evidence" value="ECO:0007669"/>
    <property type="project" value="TreeGrafter"/>
</dbReference>
<dbReference type="CDD" id="cd01999">
    <property type="entry name" value="ASS"/>
    <property type="match status" value="1"/>
</dbReference>
<dbReference type="FunFam" id="3.40.50.620:FF:000019">
    <property type="entry name" value="Argininosuccinate synthase"/>
    <property type="match status" value="1"/>
</dbReference>
<dbReference type="FunFam" id="3.90.1260.10:FF:000007">
    <property type="entry name" value="Argininosuccinate synthase"/>
    <property type="match status" value="1"/>
</dbReference>
<dbReference type="Gene3D" id="3.90.1260.10">
    <property type="entry name" value="Argininosuccinate synthetase, chain A, domain 2"/>
    <property type="match status" value="1"/>
</dbReference>
<dbReference type="Gene3D" id="3.40.50.620">
    <property type="entry name" value="HUPs"/>
    <property type="match status" value="1"/>
</dbReference>
<dbReference type="HAMAP" id="MF_00005">
    <property type="entry name" value="Arg_succ_synth_type1"/>
    <property type="match status" value="1"/>
</dbReference>
<dbReference type="InterPro" id="IPR048268">
    <property type="entry name" value="Arginosuc_syn_C"/>
</dbReference>
<dbReference type="InterPro" id="IPR048267">
    <property type="entry name" value="Arginosuc_syn_N"/>
</dbReference>
<dbReference type="InterPro" id="IPR001518">
    <property type="entry name" value="Arginosuc_synth"/>
</dbReference>
<dbReference type="InterPro" id="IPR018223">
    <property type="entry name" value="Arginosuc_synth_CS"/>
</dbReference>
<dbReference type="InterPro" id="IPR023434">
    <property type="entry name" value="Arginosuc_synth_type_1_subfam"/>
</dbReference>
<dbReference type="InterPro" id="IPR024074">
    <property type="entry name" value="AS_cat/multimer_dom_body"/>
</dbReference>
<dbReference type="InterPro" id="IPR014729">
    <property type="entry name" value="Rossmann-like_a/b/a_fold"/>
</dbReference>
<dbReference type="NCBIfam" id="TIGR00032">
    <property type="entry name" value="argG"/>
    <property type="match status" value="1"/>
</dbReference>
<dbReference type="NCBIfam" id="NF001770">
    <property type="entry name" value="PRK00509.1"/>
    <property type="match status" value="1"/>
</dbReference>
<dbReference type="PANTHER" id="PTHR11587">
    <property type="entry name" value="ARGININOSUCCINATE SYNTHASE"/>
    <property type="match status" value="1"/>
</dbReference>
<dbReference type="PANTHER" id="PTHR11587:SF2">
    <property type="entry name" value="ARGININOSUCCINATE SYNTHASE"/>
    <property type="match status" value="1"/>
</dbReference>
<dbReference type="Pfam" id="PF20979">
    <property type="entry name" value="Arginosuc_syn_C"/>
    <property type="match status" value="1"/>
</dbReference>
<dbReference type="Pfam" id="PF00764">
    <property type="entry name" value="Arginosuc_synth"/>
    <property type="match status" value="1"/>
</dbReference>
<dbReference type="SUPFAM" id="SSF52402">
    <property type="entry name" value="Adenine nucleotide alpha hydrolases-like"/>
    <property type="match status" value="1"/>
</dbReference>
<dbReference type="SUPFAM" id="SSF69864">
    <property type="entry name" value="Argininosuccinate synthetase, C-terminal domain"/>
    <property type="match status" value="1"/>
</dbReference>
<dbReference type="PROSITE" id="PS00564">
    <property type="entry name" value="ARGININOSUCCIN_SYN_1"/>
    <property type="match status" value="1"/>
</dbReference>
<dbReference type="PROSITE" id="PS00565">
    <property type="entry name" value="ARGININOSUCCIN_SYN_2"/>
    <property type="match status" value="1"/>
</dbReference>
<sequence length="390" mass="44392">MKIVLAYSGGLDTTVAIRWLKETFNADVITVTVDVGQKDNFEDIEKRAYIAGATKHYTIDAKKEFADNFISYAIKMNALYEDVYPLSTALARPLIAQKVVEIAKKEKVDYIAHGSTSKGNDQVRFDLAVKALYPEAKIIAPARIWNMTREKEIEFAKARGIPIKTESSKYSIDENLWGRSIEGDDISDPSKEVPEDAFEWTKKKNNGKITLSIEFEKGIPVAINNEKMDLVKIIQVLNEVVGSYGFGRVEHLENRVVGFKSREVYEVPAALVLINSHKDLEKTVYSPLEFRFKKYIDSQWADLVYQGLWFEPLRETIQLAGDNLNKWVTGEVKIEIEGNGMRTLGRASKYSPFSEKVASYNKGWYPTDEMARGFIEIYGMHSLLTRQVRE</sequence>
<name>ASSY_SULTO</name>
<accession>Q970V0</accession>
<accession>F9VNG0</accession>
<organism>
    <name type="scientific">Sulfurisphaera tokodaii (strain DSM 16993 / JCM 10545 / NBRC 100140 / 7)</name>
    <name type="common">Sulfolobus tokodaii</name>
    <dbReference type="NCBI Taxonomy" id="273063"/>
    <lineage>
        <taxon>Archaea</taxon>
        <taxon>Thermoproteota</taxon>
        <taxon>Thermoprotei</taxon>
        <taxon>Sulfolobales</taxon>
        <taxon>Sulfolobaceae</taxon>
        <taxon>Sulfurisphaera</taxon>
    </lineage>
</organism>
<feature type="chain" id="PRO_0000148687" description="Argininosuccinate synthase">
    <location>
        <begin position="1"/>
        <end position="390"/>
    </location>
</feature>
<feature type="binding site" evidence="1">
    <location>
        <begin position="6"/>
        <end position="14"/>
    </location>
    <ligand>
        <name>ATP</name>
        <dbReference type="ChEBI" id="CHEBI:30616"/>
    </ligand>
</feature>
<feature type="binding site" evidence="1">
    <location>
        <position position="84"/>
    </location>
    <ligand>
        <name>L-citrulline</name>
        <dbReference type="ChEBI" id="CHEBI:57743"/>
    </ligand>
</feature>
<feature type="binding site" evidence="1">
    <location>
        <position position="114"/>
    </location>
    <ligand>
        <name>ATP</name>
        <dbReference type="ChEBI" id="CHEBI:30616"/>
    </ligand>
</feature>
<feature type="binding site" evidence="1">
    <location>
        <position position="116"/>
    </location>
    <ligand>
        <name>L-aspartate</name>
        <dbReference type="ChEBI" id="CHEBI:29991"/>
    </ligand>
</feature>
<feature type="binding site" evidence="1">
    <location>
        <position position="120"/>
    </location>
    <ligand>
        <name>L-aspartate</name>
        <dbReference type="ChEBI" id="CHEBI:29991"/>
    </ligand>
</feature>
<feature type="binding site" evidence="1">
    <location>
        <position position="120"/>
    </location>
    <ligand>
        <name>L-citrulline</name>
        <dbReference type="ChEBI" id="CHEBI:57743"/>
    </ligand>
</feature>
<feature type="binding site" evidence="1">
    <location>
        <position position="121"/>
    </location>
    <ligand>
        <name>L-aspartate</name>
        <dbReference type="ChEBI" id="CHEBI:29991"/>
    </ligand>
</feature>
<feature type="binding site" evidence="1">
    <location>
        <position position="124"/>
    </location>
    <ligand>
        <name>L-citrulline</name>
        <dbReference type="ChEBI" id="CHEBI:57743"/>
    </ligand>
</feature>
<feature type="binding site" evidence="1">
    <location>
        <position position="171"/>
    </location>
    <ligand>
        <name>L-citrulline</name>
        <dbReference type="ChEBI" id="CHEBI:57743"/>
    </ligand>
</feature>
<feature type="binding site" evidence="1">
    <location>
        <position position="180"/>
    </location>
    <ligand>
        <name>L-citrulline</name>
        <dbReference type="ChEBI" id="CHEBI:57743"/>
    </ligand>
</feature>
<feature type="binding site" evidence="1">
    <location>
        <position position="253"/>
    </location>
    <ligand>
        <name>L-citrulline</name>
        <dbReference type="ChEBI" id="CHEBI:57743"/>
    </ligand>
</feature>
<feature type="binding site" evidence="1">
    <location>
        <position position="265"/>
    </location>
    <ligand>
        <name>L-citrulline</name>
        <dbReference type="ChEBI" id="CHEBI:57743"/>
    </ligand>
</feature>
<gene>
    <name evidence="1" type="primary">argG</name>
    <name type="ordered locus">STK_15010</name>
</gene>
<reference key="1">
    <citation type="journal article" date="2001" name="DNA Res.">
        <title>Complete genome sequence of an aerobic thermoacidophilic Crenarchaeon, Sulfolobus tokodaii strain7.</title>
        <authorList>
            <person name="Kawarabayasi Y."/>
            <person name="Hino Y."/>
            <person name="Horikawa H."/>
            <person name="Jin-no K."/>
            <person name="Takahashi M."/>
            <person name="Sekine M."/>
            <person name="Baba S."/>
            <person name="Ankai A."/>
            <person name="Kosugi H."/>
            <person name="Hosoyama A."/>
            <person name="Fukui S."/>
            <person name="Nagai Y."/>
            <person name="Nishijima K."/>
            <person name="Otsuka R."/>
            <person name="Nakazawa H."/>
            <person name="Takamiya M."/>
            <person name="Kato Y."/>
            <person name="Yoshizawa T."/>
            <person name="Tanaka T."/>
            <person name="Kudoh Y."/>
            <person name="Yamazaki J."/>
            <person name="Kushida N."/>
            <person name="Oguchi A."/>
            <person name="Aoki K."/>
            <person name="Masuda S."/>
            <person name="Yanagii M."/>
            <person name="Nishimura M."/>
            <person name="Yamagishi A."/>
            <person name="Oshima T."/>
            <person name="Kikuchi H."/>
        </authorList>
    </citation>
    <scope>NUCLEOTIDE SEQUENCE [LARGE SCALE GENOMIC DNA]</scope>
    <source>
        <strain>DSM 16993 / JCM 10545 / NBRC 100140 / 7</strain>
    </source>
</reference>
<comment type="catalytic activity">
    <reaction evidence="1">
        <text>L-citrulline + L-aspartate + ATP = 2-(N(omega)-L-arginino)succinate + AMP + diphosphate + H(+)</text>
        <dbReference type="Rhea" id="RHEA:10932"/>
        <dbReference type="ChEBI" id="CHEBI:15378"/>
        <dbReference type="ChEBI" id="CHEBI:29991"/>
        <dbReference type="ChEBI" id="CHEBI:30616"/>
        <dbReference type="ChEBI" id="CHEBI:33019"/>
        <dbReference type="ChEBI" id="CHEBI:57472"/>
        <dbReference type="ChEBI" id="CHEBI:57743"/>
        <dbReference type="ChEBI" id="CHEBI:456215"/>
        <dbReference type="EC" id="6.3.4.5"/>
    </reaction>
</comment>
<comment type="pathway">
    <text evidence="1">Amino-acid biosynthesis; L-arginine biosynthesis; L-arginine from L-ornithine and carbamoyl phosphate: step 2/3.</text>
</comment>
<comment type="subunit">
    <text evidence="1">Homotetramer.</text>
</comment>
<comment type="subcellular location">
    <subcellularLocation>
        <location evidence="1">Cytoplasm</location>
    </subcellularLocation>
</comment>
<comment type="similarity">
    <text evidence="1">Belongs to the argininosuccinate synthase family. Type 1 subfamily.</text>
</comment>
<evidence type="ECO:0000255" key="1">
    <source>
        <dbReference type="HAMAP-Rule" id="MF_00005"/>
    </source>
</evidence>
<keyword id="KW-0028">Amino-acid biosynthesis</keyword>
<keyword id="KW-0055">Arginine biosynthesis</keyword>
<keyword id="KW-0067">ATP-binding</keyword>
<keyword id="KW-0963">Cytoplasm</keyword>
<keyword id="KW-0436">Ligase</keyword>
<keyword id="KW-0547">Nucleotide-binding</keyword>
<keyword id="KW-1185">Reference proteome</keyword>
<proteinExistence type="inferred from homology"/>
<protein>
    <recommendedName>
        <fullName evidence="1">Argininosuccinate synthase</fullName>
        <ecNumber evidence="1">6.3.4.5</ecNumber>
    </recommendedName>
    <alternativeName>
        <fullName evidence="1">Citrulline--aspartate ligase</fullName>
    </alternativeName>
</protein>